<accession>Q8Z2V6</accession>
<accession>Q7C6N1</accession>
<organism>
    <name type="scientific">Salmonella typhi</name>
    <dbReference type="NCBI Taxonomy" id="90370"/>
    <lineage>
        <taxon>Bacteria</taxon>
        <taxon>Pseudomonadati</taxon>
        <taxon>Pseudomonadota</taxon>
        <taxon>Gammaproteobacteria</taxon>
        <taxon>Enterobacterales</taxon>
        <taxon>Enterobacteriaceae</taxon>
        <taxon>Salmonella</taxon>
    </lineage>
</organism>
<comment type="function">
    <text evidence="1">Uptake of L-rhamnose across the cytoplasmic membrane with the concomitant transport of protons into the cell (symport system).</text>
</comment>
<comment type="catalytic activity">
    <reaction evidence="1">
        <text>L-rhamnopyranose(in) + H(+)(in) = L-rhamnopyranose(out) + H(+)(out)</text>
        <dbReference type="Rhea" id="RHEA:29947"/>
        <dbReference type="ChEBI" id="CHEBI:15378"/>
        <dbReference type="ChEBI" id="CHEBI:62346"/>
    </reaction>
    <physiologicalReaction direction="right-to-left" evidence="1">
        <dbReference type="Rhea" id="RHEA:29949"/>
    </physiologicalReaction>
</comment>
<comment type="subcellular location">
    <subcellularLocation>
        <location evidence="1">Cell inner membrane</location>
        <topology evidence="1">Multi-pass membrane protein</topology>
    </subcellularLocation>
</comment>
<comment type="similarity">
    <text evidence="1">Belongs to the L-rhamnose transporter (TC 2.A.7.6) family.</text>
</comment>
<dbReference type="EMBL" id="AL513382">
    <property type="protein sequence ID" value="CAD09574.1"/>
    <property type="molecule type" value="Genomic_DNA"/>
</dbReference>
<dbReference type="EMBL" id="AE014613">
    <property type="protein sequence ID" value="AAO71073.1"/>
    <property type="molecule type" value="Genomic_DNA"/>
</dbReference>
<dbReference type="RefSeq" id="NP_458000.1">
    <property type="nucleotide sequence ID" value="NC_003198.1"/>
</dbReference>
<dbReference type="RefSeq" id="WP_000063537.1">
    <property type="nucleotide sequence ID" value="NZ_WSUR01000010.1"/>
</dbReference>
<dbReference type="STRING" id="220341.gene:17587685"/>
<dbReference type="KEGG" id="stt:t3569"/>
<dbReference type="KEGG" id="sty:STY3823"/>
<dbReference type="PATRIC" id="fig|220341.7.peg.3903"/>
<dbReference type="eggNOG" id="ENOG502Z7ID">
    <property type="taxonomic scope" value="Bacteria"/>
</dbReference>
<dbReference type="HOGENOM" id="CLU_066437_0_0_6"/>
<dbReference type="OMA" id="QFFFYGM"/>
<dbReference type="OrthoDB" id="9790043at2"/>
<dbReference type="Proteomes" id="UP000000541">
    <property type="component" value="Chromosome"/>
</dbReference>
<dbReference type="Proteomes" id="UP000002670">
    <property type="component" value="Chromosome"/>
</dbReference>
<dbReference type="GO" id="GO:0005886">
    <property type="term" value="C:plasma membrane"/>
    <property type="evidence" value="ECO:0007669"/>
    <property type="project" value="UniProtKB-SubCell"/>
</dbReference>
<dbReference type="GO" id="GO:0015153">
    <property type="term" value="F:rhamnose transmembrane transporter activity"/>
    <property type="evidence" value="ECO:0007669"/>
    <property type="project" value="UniProtKB-UniRule"/>
</dbReference>
<dbReference type="GO" id="GO:0015293">
    <property type="term" value="F:symporter activity"/>
    <property type="evidence" value="ECO:0007669"/>
    <property type="project" value="UniProtKB-KW"/>
</dbReference>
<dbReference type="HAMAP" id="MF_01532">
    <property type="entry name" value="RhaT"/>
    <property type="match status" value="1"/>
</dbReference>
<dbReference type="InterPro" id="IPR004673">
    <property type="entry name" value="L-rhamnose-proton_sym_RhaT"/>
</dbReference>
<dbReference type="NCBIfam" id="NF010021">
    <property type="entry name" value="PRK13499.1-1"/>
    <property type="match status" value="1"/>
</dbReference>
<dbReference type="NCBIfam" id="NF010023">
    <property type="entry name" value="PRK13499.1-3"/>
    <property type="match status" value="1"/>
</dbReference>
<dbReference type="NCBIfam" id="TIGR00776">
    <property type="entry name" value="RhaT"/>
    <property type="match status" value="1"/>
</dbReference>
<dbReference type="Pfam" id="PF06379">
    <property type="entry name" value="RhaT"/>
    <property type="match status" value="1"/>
</dbReference>
<reference key="1">
    <citation type="journal article" date="2001" name="Nature">
        <title>Complete genome sequence of a multiple drug resistant Salmonella enterica serovar Typhi CT18.</title>
        <authorList>
            <person name="Parkhill J."/>
            <person name="Dougan G."/>
            <person name="James K.D."/>
            <person name="Thomson N.R."/>
            <person name="Pickard D."/>
            <person name="Wain J."/>
            <person name="Churcher C.M."/>
            <person name="Mungall K.L."/>
            <person name="Bentley S.D."/>
            <person name="Holden M.T.G."/>
            <person name="Sebaihia M."/>
            <person name="Baker S."/>
            <person name="Basham D."/>
            <person name="Brooks K."/>
            <person name="Chillingworth T."/>
            <person name="Connerton P."/>
            <person name="Cronin A."/>
            <person name="Davis P."/>
            <person name="Davies R.M."/>
            <person name="Dowd L."/>
            <person name="White N."/>
            <person name="Farrar J."/>
            <person name="Feltwell T."/>
            <person name="Hamlin N."/>
            <person name="Haque A."/>
            <person name="Hien T.T."/>
            <person name="Holroyd S."/>
            <person name="Jagels K."/>
            <person name="Krogh A."/>
            <person name="Larsen T.S."/>
            <person name="Leather S."/>
            <person name="Moule S."/>
            <person name="O'Gaora P."/>
            <person name="Parry C."/>
            <person name="Quail M.A."/>
            <person name="Rutherford K.M."/>
            <person name="Simmonds M."/>
            <person name="Skelton J."/>
            <person name="Stevens K."/>
            <person name="Whitehead S."/>
            <person name="Barrell B.G."/>
        </authorList>
    </citation>
    <scope>NUCLEOTIDE SEQUENCE [LARGE SCALE GENOMIC DNA]</scope>
    <source>
        <strain>CT18</strain>
    </source>
</reference>
<reference key="2">
    <citation type="journal article" date="2003" name="J. Bacteriol.">
        <title>Comparative genomics of Salmonella enterica serovar Typhi strains Ty2 and CT18.</title>
        <authorList>
            <person name="Deng W."/>
            <person name="Liou S.-R."/>
            <person name="Plunkett G. III"/>
            <person name="Mayhew G.F."/>
            <person name="Rose D.J."/>
            <person name="Burland V."/>
            <person name="Kodoyianni V."/>
            <person name="Schwartz D.C."/>
            <person name="Blattner F.R."/>
        </authorList>
    </citation>
    <scope>NUCLEOTIDE SEQUENCE [LARGE SCALE GENOMIC DNA]</scope>
    <source>
        <strain>ATCC 700931 / Ty2</strain>
    </source>
</reference>
<sequence>MSNAITMGIFWHLIGAASAACFYAPFKQVKQWSWETMWSVGGIVSWLILPWTISALLLPDFWAYYGQFNLSTLLPVFLFGAMWGIGNINYGLTMRYLGMSMGIGIAIGITLIVGTLMTPIINGNFDVLIHTEGGHMTLLGVFVALIGVGIVTRAGQLKERKMGIKAEEFNLKKGLLLAVMCGIFSAGMSFAMNAAKPMHEAAAALGVDPLYVALPSYVVIMGGGALVNLGFCFIRLAKVQNLSIKADFSLARPLIISNILLSALGGLMWYLQFFFYAWGHARIPAQYDYMSWMLHMSFYVLCGGLVGLVLKEWKNAGRRPVAVLSLGCVVIIIAANIVGLGMAS</sequence>
<name>RHAT_SALTI</name>
<gene>
    <name evidence="1" type="primary">rhaT</name>
    <name type="ordered locus">STY3823</name>
    <name type="ordered locus">t3569</name>
</gene>
<keyword id="KW-0997">Cell inner membrane</keyword>
<keyword id="KW-1003">Cell membrane</keyword>
<keyword id="KW-0472">Membrane</keyword>
<keyword id="KW-0762">Sugar transport</keyword>
<keyword id="KW-0769">Symport</keyword>
<keyword id="KW-0812">Transmembrane</keyword>
<keyword id="KW-1133">Transmembrane helix</keyword>
<keyword id="KW-0813">Transport</keyword>
<proteinExistence type="inferred from homology"/>
<evidence type="ECO:0000255" key="1">
    <source>
        <dbReference type="HAMAP-Rule" id="MF_01532"/>
    </source>
</evidence>
<protein>
    <recommendedName>
        <fullName evidence="1">L-rhamnose-proton symporter</fullName>
    </recommendedName>
    <alternativeName>
        <fullName evidence="1">L-rhamnose-H(+) transport protein</fullName>
    </alternativeName>
</protein>
<feature type="chain" id="PRO_0000208279" description="L-rhamnose-proton symporter">
    <location>
        <begin position="1"/>
        <end position="344"/>
    </location>
</feature>
<feature type="transmembrane region" description="Helical" evidence="1">
    <location>
        <begin position="4"/>
        <end position="24"/>
    </location>
</feature>
<feature type="transmembrane region" description="Helical" evidence="1">
    <location>
        <begin position="38"/>
        <end position="58"/>
    </location>
</feature>
<feature type="transmembrane region" description="Helical" evidence="1">
    <location>
        <begin position="68"/>
        <end position="88"/>
    </location>
</feature>
<feature type="transmembrane region" description="Helical" evidence="1">
    <location>
        <begin position="101"/>
        <end position="121"/>
    </location>
</feature>
<feature type="transmembrane region" description="Helical" evidence="1">
    <location>
        <begin position="131"/>
        <end position="151"/>
    </location>
</feature>
<feature type="transmembrane region" description="Helical" evidence="1">
    <location>
        <begin position="175"/>
        <end position="195"/>
    </location>
</feature>
<feature type="transmembrane region" description="Helical" evidence="1">
    <location>
        <begin position="214"/>
        <end position="234"/>
    </location>
</feature>
<feature type="transmembrane region" description="Helical" evidence="1">
    <location>
        <begin position="259"/>
        <end position="279"/>
    </location>
</feature>
<feature type="transmembrane region" description="Helical" evidence="1">
    <location>
        <begin position="290"/>
        <end position="310"/>
    </location>
</feature>
<feature type="transmembrane region" description="Helical" evidence="1">
    <location>
        <begin position="321"/>
        <end position="341"/>
    </location>
</feature>